<accession>Q9KV22</accession>
<name>GPMI_VIBCH</name>
<proteinExistence type="inferred from homology"/>
<protein>
    <recommendedName>
        <fullName evidence="1">2,3-bisphosphoglycerate-independent phosphoglycerate mutase</fullName>
        <shortName evidence="1">BPG-independent PGAM</shortName>
        <shortName evidence="1">Phosphoglyceromutase</shortName>
        <shortName evidence="1">iPGM</shortName>
        <ecNumber evidence="1">5.4.2.12</ecNumber>
    </recommendedName>
</protein>
<reference key="1">
    <citation type="journal article" date="2000" name="Nature">
        <title>DNA sequence of both chromosomes of the cholera pathogen Vibrio cholerae.</title>
        <authorList>
            <person name="Heidelberg J.F."/>
            <person name="Eisen J.A."/>
            <person name="Nelson W.C."/>
            <person name="Clayton R.A."/>
            <person name="Gwinn M.L."/>
            <person name="Dodson R.J."/>
            <person name="Haft D.H."/>
            <person name="Hickey E.K."/>
            <person name="Peterson J.D."/>
            <person name="Umayam L.A."/>
            <person name="Gill S.R."/>
            <person name="Nelson K.E."/>
            <person name="Read T.D."/>
            <person name="Tettelin H."/>
            <person name="Richardson D.L."/>
            <person name="Ermolaeva M.D."/>
            <person name="Vamathevan J.J."/>
            <person name="Bass S."/>
            <person name="Qin H."/>
            <person name="Dragoi I."/>
            <person name="Sellers P."/>
            <person name="McDonald L.A."/>
            <person name="Utterback T.R."/>
            <person name="Fleischmann R.D."/>
            <person name="Nierman W.C."/>
            <person name="White O."/>
            <person name="Salzberg S.L."/>
            <person name="Smith H.O."/>
            <person name="Colwell R.R."/>
            <person name="Mekalanos J.J."/>
            <person name="Venter J.C."/>
            <person name="Fraser C.M."/>
        </authorList>
    </citation>
    <scope>NUCLEOTIDE SEQUENCE [LARGE SCALE GENOMIC DNA]</scope>
    <source>
        <strain>ATCC 39315 / El Tor Inaba N16961</strain>
    </source>
</reference>
<organism>
    <name type="scientific">Vibrio cholerae serotype O1 (strain ATCC 39315 / El Tor Inaba N16961)</name>
    <dbReference type="NCBI Taxonomy" id="243277"/>
    <lineage>
        <taxon>Bacteria</taxon>
        <taxon>Pseudomonadati</taxon>
        <taxon>Pseudomonadota</taxon>
        <taxon>Gammaproteobacteria</taxon>
        <taxon>Vibrionales</taxon>
        <taxon>Vibrionaceae</taxon>
        <taxon>Vibrio</taxon>
    </lineage>
</organism>
<dbReference type="EC" id="5.4.2.12" evidence="1"/>
<dbReference type="EMBL" id="AE003852">
    <property type="protein sequence ID" value="AAF93509.1"/>
    <property type="molecule type" value="Genomic_DNA"/>
</dbReference>
<dbReference type="PIR" id="G82335">
    <property type="entry name" value="G82335"/>
</dbReference>
<dbReference type="RefSeq" id="NP_229990.1">
    <property type="nucleotide sequence ID" value="NC_002505.1"/>
</dbReference>
<dbReference type="SMR" id="Q9KV22"/>
<dbReference type="STRING" id="243277.VC_0336"/>
<dbReference type="DNASU" id="2615072"/>
<dbReference type="EnsemblBacteria" id="AAF93509">
    <property type="protein sequence ID" value="AAF93509"/>
    <property type="gene ID" value="VC_0336"/>
</dbReference>
<dbReference type="KEGG" id="vch:VC_0336"/>
<dbReference type="PATRIC" id="fig|243277.26.peg.313"/>
<dbReference type="eggNOG" id="COG0696">
    <property type="taxonomic scope" value="Bacteria"/>
</dbReference>
<dbReference type="HOGENOM" id="CLU_026099_2_0_6"/>
<dbReference type="UniPathway" id="UPA00109">
    <property type="reaction ID" value="UER00186"/>
</dbReference>
<dbReference type="Proteomes" id="UP000000584">
    <property type="component" value="Chromosome 1"/>
</dbReference>
<dbReference type="GO" id="GO:0005829">
    <property type="term" value="C:cytosol"/>
    <property type="evidence" value="ECO:0000318"/>
    <property type="project" value="GO_Central"/>
</dbReference>
<dbReference type="GO" id="GO:0030145">
    <property type="term" value="F:manganese ion binding"/>
    <property type="evidence" value="ECO:0000318"/>
    <property type="project" value="GO_Central"/>
</dbReference>
<dbReference type="GO" id="GO:0004619">
    <property type="term" value="F:phosphoglycerate mutase activity"/>
    <property type="evidence" value="ECO:0000318"/>
    <property type="project" value="GO_Central"/>
</dbReference>
<dbReference type="GO" id="GO:0005975">
    <property type="term" value="P:carbohydrate metabolic process"/>
    <property type="evidence" value="ECO:0000318"/>
    <property type="project" value="GO_Central"/>
</dbReference>
<dbReference type="GO" id="GO:0006007">
    <property type="term" value="P:glucose catabolic process"/>
    <property type="evidence" value="ECO:0007669"/>
    <property type="project" value="InterPro"/>
</dbReference>
<dbReference type="GO" id="GO:0006096">
    <property type="term" value="P:glycolytic process"/>
    <property type="evidence" value="ECO:0007669"/>
    <property type="project" value="UniProtKB-UniRule"/>
</dbReference>
<dbReference type="CDD" id="cd16010">
    <property type="entry name" value="iPGM"/>
    <property type="match status" value="1"/>
</dbReference>
<dbReference type="FunFam" id="3.40.1450.10:FF:000001">
    <property type="entry name" value="2,3-bisphosphoglycerate-independent phosphoglycerate mutase"/>
    <property type="match status" value="1"/>
</dbReference>
<dbReference type="FunFam" id="3.40.720.10:FF:000001">
    <property type="entry name" value="2,3-bisphosphoglycerate-independent phosphoglycerate mutase"/>
    <property type="match status" value="1"/>
</dbReference>
<dbReference type="Gene3D" id="3.40.720.10">
    <property type="entry name" value="Alkaline Phosphatase, subunit A"/>
    <property type="match status" value="1"/>
</dbReference>
<dbReference type="Gene3D" id="3.40.1450.10">
    <property type="entry name" value="BPG-independent phosphoglycerate mutase, domain B"/>
    <property type="match status" value="1"/>
</dbReference>
<dbReference type="HAMAP" id="MF_01038">
    <property type="entry name" value="GpmI"/>
    <property type="match status" value="1"/>
</dbReference>
<dbReference type="InterPro" id="IPR017850">
    <property type="entry name" value="Alkaline_phosphatase_core_sf"/>
</dbReference>
<dbReference type="InterPro" id="IPR011258">
    <property type="entry name" value="BPG-indep_PGM_N"/>
</dbReference>
<dbReference type="InterPro" id="IPR006124">
    <property type="entry name" value="Metalloenzyme"/>
</dbReference>
<dbReference type="InterPro" id="IPR036646">
    <property type="entry name" value="PGAM_B_sf"/>
</dbReference>
<dbReference type="InterPro" id="IPR005995">
    <property type="entry name" value="Pgm_bpd_ind"/>
</dbReference>
<dbReference type="NCBIfam" id="TIGR01307">
    <property type="entry name" value="pgm_bpd_ind"/>
    <property type="match status" value="1"/>
</dbReference>
<dbReference type="NCBIfam" id="NF003897">
    <property type="entry name" value="PRK05434.1-5"/>
    <property type="match status" value="1"/>
</dbReference>
<dbReference type="PANTHER" id="PTHR31637">
    <property type="entry name" value="2,3-BISPHOSPHOGLYCERATE-INDEPENDENT PHOSPHOGLYCERATE MUTASE"/>
    <property type="match status" value="1"/>
</dbReference>
<dbReference type="PANTHER" id="PTHR31637:SF0">
    <property type="entry name" value="2,3-BISPHOSPHOGLYCERATE-INDEPENDENT PHOSPHOGLYCERATE MUTASE"/>
    <property type="match status" value="1"/>
</dbReference>
<dbReference type="Pfam" id="PF06415">
    <property type="entry name" value="iPGM_N"/>
    <property type="match status" value="1"/>
</dbReference>
<dbReference type="Pfam" id="PF01676">
    <property type="entry name" value="Metalloenzyme"/>
    <property type="match status" value="1"/>
</dbReference>
<dbReference type="PIRSF" id="PIRSF001492">
    <property type="entry name" value="IPGAM"/>
    <property type="match status" value="1"/>
</dbReference>
<dbReference type="SUPFAM" id="SSF64158">
    <property type="entry name" value="2,3-Bisphosphoglycerate-independent phosphoglycerate mutase, substrate-binding domain"/>
    <property type="match status" value="1"/>
</dbReference>
<dbReference type="SUPFAM" id="SSF53649">
    <property type="entry name" value="Alkaline phosphatase-like"/>
    <property type="match status" value="1"/>
</dbReference>
<sequence length="510" mass="55365">MSAKKPMALVILDGWGYREDNANNAINNARTPVMDSLMANNPHTLISASGMDVGLPDGQMGNSEVGHTNIGAGRIVYQDLTRITKAIMDGEFQHNKVLVAAIDKAVAAGKAVHLMGLMSPGGVHSHEDHIYAAVEMAAARGAEKIYLHCFLDGRDTPPRSAEASLKRFQDLFAKLGKGRIASIVGRYYAMDRDNNWDRVEKAYDLLTLAQGEFTYDSAVEALQAAYAREENDEFVKATEIRAAGQESAAMQDGDALLFMNYRADRARQITRTFVPDFAGFSRKAFPALDFVMLTQYAADIPLQCAFGPASLENTYGEWLSKAGKTQLRISETEKYAHVTFFFNGGVENEFPGEERQLVASPKVATYDLQPEMSSKELTDKLVAAIKSGKYDAIICNYPNGDMVGHTGVYEAAVKACEAVDECIGRVVEAIKEVDGQLLITADHGNAEMMIDPETGGVHTAHTSLPVPLIYVGNKAISLKEGGKLSDLAPTMLALSDLDIPADMSGQVLYS</sequence>
<comment type="function">
    <text evidence="1">Catalyzes the interconversion of 2-phosphoglycerate and 3-phosphoglycerate.</text>
</comment>
<comment type="catalytic activity">
    <reaction evidence="1">
        <text>(2R)-2-phosphoglycerate = (2R)-3-phosphoglycerate</text>
        <dbReference type="Rhea" id="RHEA:15901"/>
        <dbReference type="ChEBI" id="CHEBI:58272"/>
        <dbReference type="ChEBI" id="CHEBI:58289"/>
        <dbReference type="EC" id="5.4.2.12"/>
    </reaction>
</comment>
<comment type="cofactor">
    <cofactor evidence="1">
        <name>Mn(2+)</name>
        <dbReference type="ChEBI" id="CHEBI:29035"/>
    </cofactor>
    <text evidence="1">Binds 2 manganese ions per subunit.</text>
</comment>
<comment type="pathway">
    <text evidence="1">Carbohydrate degradation; glycolysis; pyruvate from D-glyceraldehyde 3-phosphate: step 3/5.</text>
</comment>
<comment type="subunit">
    <text evidence="1">Monomer.</text>
</comment>
<comment type="similarity">
    <text evidence="1">Belongs to the BPG-independent phosphoglycerate mutase family.</text>
</comment>
<feature type="chain" id="PRO_0000212226" description="2,3-bisphosphoglycerate-independent phosphoglycerate mutase">
    <location>
        <begin position="1"/>
        <end position="510"/>
    </location>
</feature>
<feature type="active site" description="Phosphoserine intermediate" evidence="1">
    <location>
        <position position="63"/>
    </location>
</feature>
<feature type="binding site" evidence="1">
    <location>
        <position position="13"/>
    </location>
    <ligand>
        <name>Mn(2+)</name>
        <dbReference type="ChEBI" id="CHEBI:29035"/>
        <label>2</label>
    </ligand>
</feature>
<feature type="binding site" evidence="1">
    <location>
        <position position="63"/>
    </location>
    <ligand>
        <name>Mn(2+)</name>
        <dbReference type="ChEBI" id="CHEBI:29035"/>
        <label>2</label>
    </ligand>
</feature>
<feature type="binding site" evidence="1">
    <location>
        <position position="124"/>
    </location>
    <ligand>
        <name>substrate</name>
    </ligand>
</feature>
<feature type="binding site" evidence="1">
    <location>
        <begin position="154"/>
        <end position="155"/>
    </location>
    <ligand>
        <name>substrate</name>
    </ligand>
</feature>
<feature type="binding site" evidence="1">
    <location>
        <position position="186"/>
    </location>
    <ligand>
        <name>substrate</name>
    </ligand>
</feature>
<feature type="binding site" evidence="1">
    <location>
        <position position="192"/>
    </location>
    <ligand>
        <name>substrate</name>
    </ligand>
</feature>
<feature type="binding site" evidence="1">
    <location>
        <begin position="262"/>
        <end position="265"/>
    </location>
    <ligand>
        <name>substrate</name>
    </ligand>
</feature>
<feature type="binding site" evidence="1">
    <location>
        <position position="334"/>
    </location>
    <ligand>
        <name>substrate</name>
    </ligand>
</feature>
<feature type="binding site" evidence="1">
    <location>
        <position position="401"/>
    </location>
    <ligand>
        <name>Mn(2+)</name>
        <dbReference type="ChEBI" id="CHEBI:29035"/>
        <label>1</label>
    </ligand>
</feature>
<feature type="binding site" evidence="1">
    <location>
        <position position="405"/>
    </location>
    <ligand>
        <name>Mn(2+)</name>
        <dbReference type="ChEBI" id="CHEBI:29035"/>
        <label>1</label>
    </ligand>
</feature>
<feature type="binding site" evidence="1">
    <location>
        <position position="442"/>
    </location>
    <ligand>
        <name>Mn(2+)</name>
        <dbReference type="ChEBI" id="CHEBI:29035"/>
        <label>2</label>
    </ligand>
</feature>
<feature type="binding site" evidence="1">
    <location>
        <position position="443"/>
    </location>
    <ligand>
        <name>Mn(2+)</name>
        <dbReference type="ChEBI" id="CHEBI:29035"/>
        <label>2</label>
    </ligand>
</feature>
<feature type="binding site" evidence="1">
    <location>
        <position position="461"/>
    </location>
    <ligand>
        <name>Mn(2+)</name>
        <dbReference type="ChEBI" id="CHEBI:29035"/>
        <label>1</label>
    </ligand>
</feature>
<evidence type="ECO:0000255" key="1">
    <source>
        <dbReference type="HAMAP-Rule" id="MF_01038"/>
    </source>
</evidence>
<keyword id="KW-0324">Glycolysis</keyword>
<keyword id="KW-0413">Isomerase</keyword>
<keyword id="KW-0464">Manganese</keyword>
<keyword id="KW-0479">Metal-binding</keyword>
<keyword id="KW-1185">Reference proteome</keyword>
<gene>
    <name evidence="1" type="primary">gpmI</name>
    <name type="ordered locus">VC_0336</name>
</gene>